<keyword id="KW-0046">Antibiotic resistance</keyword>
<keyword id="KW-1003">Cell membrane</keyword>
<keyword id="KW-0133">Cell shape</keyword>
<keyword id="KW-0961">Cell wall biogenesis/degradation</keyword>
<keyword id="KW-0378">Hydrolase</keyword>
<keyword id="KW-0472">Membrane</keyword>
<keyword id="KW-0573">Peptidoglycan synthesis</keyword>
<keyword id="KW-1185">Reference proteome</keyword>
<keyword id="KW-0812">Transmembrane</keyword>
<keyword id="KW-1133">Transmembrane helix</keyword>
<dbReference type="EC" id="3.6.1.27" evidence="1"/>
<dbReference type="EMBL" id="CP000249">
    <property type="protein sequence ID" value="ABD11769.1"/>
    <property type="molecule type" value="Genomic_DNA"/>
</dbReference>
<dbReference type="RefSeq" id="WP_011436814.1">
    <property type="nucleotide sequence ID" value="NC_007777.1"/>
</dbReference>
<dbReference type="SMR" id="Q2JAC3"/>
<dbReference type="STRING" id="106370.Francci3_2402"/>
<dbReference type="KEGG" id="fra:Francci3_2402"/>
<dbReference type="eggNOG" id="COG1968">
    <property type="taxonomic scope" value="Bacteria"/>
</dbReference>
<dbReference type="HOGENOM" id="CLU_060296_1_1_11"/>
<dbReference type="OrthoDB" id="9808289at2"/>
<dbReference type="PhylomeDB" id="Q2JAC3"/>
<dbReference type="Proteomes" id="UP000001937">
    <property type="component" value="Chromosome"/>
</dbReference>
<dbReference type="GO" id="GO:0005886">
    <property type="term" value="C:plasma membrane"/>
    <property type="evidence" value="ECO:0007669"/>
    <property type="project" value="UniProtKB-SubCell"/>
</dbReference>
<dbReference type="GO" id="GO:0050380">
    <property type="term" value="F:undecaprenyl-diphosphatase activity"/>
    <property type="evidence" value="ECO:0007669"/>
    <property type="project" value="UniProtKB-UniRule"/>
</dbReference>
<dbReference type="GO" id="GO:0071555">
    <property type="term" value="P:cell wall organization"/>
    <property type="evidence" value="ECO:0007669"/>
    <property type="project" value="UniProtKB-KW"/>
</dbReference>
<dbReference type="GO" id="GO:0009252">
    <property type="term" value="P:peptidoglycan biosynthetic process"/>
    <property type="evidence" value="ECO:0007669"/>
    <property type="project" value="UniProtKB-KW"/>
</dbReference>
<dbReference type="GO" id="GO:0008360">
    <property type="term" value="P:regulation of cell shape"/>
    <property type="evidence" value="ECO:0007669"/>
    <property type="project" value="UniProtKB-KW"/>
</dbReference>
<dbReference type="GO" id="GO:0046677">
    <property type="term" value="P:response to antibiotic"/>
    <property type="evidence" value="ECO:0007669"/>
    <property type="project" value="UniProtKB-UniRule"/>
</dbReference>
<dbReference type="HAMAP" id="MF_01006">
    <property type="entry name" value="Undec_diphosphatase"/>
    <property type="match status" value="1"/>
</dbReference>
<dbReference type="InterPro" id="IPR003824">
    <property type="entry name" value="UppP"/>
</dbReference>
<dbReference type="NCBIfam" id="NF001395">
    <property type="entry name" value="PRK00281.3-1"/>
    <property type="match status" value="1"/>
</dbReference>
<dbReference type="PANTHER" id="PTHR30622">
    <property type="entry name" value="UNDECAPRENYL-DIPHOSPHATASE"/>
    <property type="match status" value="1"/>
</dbReference>
<dbReference type="PANTHER" id="PTHR30622:SF4">
    <property type="entry name" value="UNDECAPRENYL-DIPHOSPHATASE"/>
    <property type="match status" value="1"/>
</dbReference>
<dbReference type="Pfam" id="PF02673">
    <property type="entry name" value="BacA"/>
    <property type="match status" value="2"/>
</dbReference>
<proteinExistence type="inferred from homology"/>
<comment type="function">
    <text evidence="1">Catalyzes the dephosphorylation of undecaprenyl diphosphate (UPP). Confers resistance to bacitracin.</text>
</comment>
<comment type="catalytic activity">
    <reaction evidence="1">
        <text>di-trans,octa-cis-undecaprenyl diphosphate + H2O = di-trans,octa-cis-undecaprenyl phosphate + phosphate + H(+)</text>
        <dbReference type="Rhea" id="RHEA:28094"/>
        <dbReference type="ChEBI" id="CHEBI:15377"/>
        <dbReference type="ChEBI" id="CHEBI:15378"/>
        <dbReference type="ChEBI" id="CHEBI:43474"/>
        <dbReference type="ChEBI" id="CHEBI:58405"/>
        <dbReference type="ChEBI" id="CHEBI:60392"/>
        <dbReference type="EC" id="3.6.1.27"/>
    </reaction>
</comment>
<comment type="subcellular location">
    <subcellularLocation>
        <location evidence="1">Cell membrane</location>
        <topology evidence="1">Multi-pass membrane protein</topology>
    </subcellularLocation>
</comment>
<comment type="miscellaneous">
    <text>Bacitracin is thought to be involved in the inhibition of peptidoglycan synthesis by sequestering undecaprenyl diphosphate, thereby reducing the pool of lipid carrier available.</text>
</comment>
<comment type="similarity">
    <text evidence="1">Belongs to the UppP family.</text>
</comment>
<sequence length="371" mass="38699">MSSFSYAEAGVIGALQGATELFPVSSLGHSVLVPALIGGRWAADLDVSAPESPYLAFIVAVHVATAAALIVAFRDDWRRIITGLAVSVRDRRVTTADGRLAWLIILGTVPVGIVGLLLEHPLRTHLGRPLPAAVFLTVNGMIMLLGERLRRRSTTRGAPGPAGYRDEHTMPIPRSAPVTGRRVGTRPASGPLVAHGSAPGSGPGNHSKAVTTETALPEAEDVTLPEAETALPEAETAARHADRRLAALPRLDALLVGVAQTAALAPGISRSGVTMIAGLSRGLSHLDAARFAFLLATPVILAAGLLKLPDLLGPLGDGVRGQTLFGAIVAGVVAYVSIRFLARWFETRTATPFAVYCLVAGALCVVRFGIF</sequence>
<feature type="chain" id="PRO_0000250235" description="Undecaprenyl-diphosphatase 1">
    <location>
        <begin position="1"/>
        <end position="371"/>
    </location>
</feature>
<feature type="transmembrane region" description="Helical" evidence="1">
    <location>
        <begin position="53"/>
        <end position="73"/>
    </location>
</feature>
<feature type="transmembrane region" description="Helical" evidence="1">
    <location>
        <begin position="100"/>
        <end position="120"/>
    </location>
</feature>
<feature type="transmembrane region" description="Helical" evidence="1">
    <location>
        <begin position="126"/>
        <end position="146"/>
    </location>
</feature>
<feature type="transmembrane region" description="Helical" evidence="1">
    <location>
        <begin position="291"/>
        <end position="311"/>
    </location>
</feature>
<feature type="transmembrane region" description="Helical" evidence="1">
    <location>
        <begin position="322"/>
        <end position="342"/>
    </location>
</feature>
<feature type="transmembrane region" description="Helical" evidence="1">
    <location>
        <begin position="351"/>
        <end position="371"/>
    </location>
</feature>
<feature type="region of interest" description="Disordered" evidence="2">
    <location>
        <begin position="152"/>
        <end position="226"/>
    </location>
</feature>
<accession>Q2JAC3</accession>
<organism>
    <name type="scientific">Frankia casuarinae (strain DSM 45818 / CECT 9043 / HFP020203 / CcI3)</name>
    <dbReference type="NCBI Taxonomy" id="106370"/>
    <lineage>
        <taxon>Bacteria</taxon>
        <taxon>Bacillati</taxon>
        <taxon>Actinomycetota</taxon>
        <taxon>Actinomycetes</taxon>
        <taxon>Frankiales</taxon>
        <taxon>Frankiaceae</taxon>
        <taxon>Frankia</taxon>
    </lineage>
</organism>
<name>UPPP1_FRACC</name>
<gene>
    <name evidence="1" type="primary">uppP1</name>
    <name type="ordered locus">Francci3_2402</name>
</gene>
<reference key="1">
    <citation type="journal article" date="2007" name="Genome Res.">
        <title>Genome characteristics of facultatively symbiotic Frankia sp. strains reflect host range and host plant biogeography.</title>
        <authorList>
            <person name="Normand P."/>
            <person name="Lapierre P."/>
            <person name="Tisa L.S."/>
            <person name="Gogarten J.P."/>
            <person name="Alloisio N."/>
            <person name="Bagnarol E."/>
            <person name="Bassi C.A."/>
            <person name="Berry A.M."/>
            <person name="Bickhart D.M."/>
            <person name="Choisne N."/>
            <person name="Couloux A."/>
            <person name="Cournoyer B."/>
            <person name="Cruveiller S."/>
            <person name="Daubin V."/>
            <person name="Demange N."/>
            <person name="Francino M.P."/>
            <person name="Goltsman E."/>
            <person name="Huang Y."/>
            <person name="Kopp O.R."/>
            <person name="Labarre L."/>
            <person name="Lapidus A."/>
            <person name="Lavire C."/>
            <person name="Marechal J."/>
            <person name="Martinez M."/>
            <person name="Mastronunzio J.E."/>
            <person name="Mullin B.C."/>
            <person name="Niemann J."/>
            <person name="Pujic P."/>
            <person name="Rawnsley T."/>
            <person name="Rouy Z."/>
            <person name="Schenowitz C."/>
            <person name="Sellstedt A."/>
            <person name="Tavares F."/>
            <person name="Tomkins J.P."/>
            <person name="Vallenet D."/>
            <person name="Valverde C."/>
            <person name="Wall L.G."/>
            <person name="Wang Y."/>
            <person name="Medigue C."/>
            <person name="Benson D.R."/>
        </authorList>
    </citation>
    <scope>NUCLEOTIDE SEQUENCE [LARGE SCALE GENOMIC DNA]</scope>
    <source>
        <strain>DSM 45818 / CECT 9043 / HFP020203 / CcI3</strain>
    </source>
</reference>
<protein>
    <recommendedName>
        <fullName evidence="1">Undecaprenyl-diphosphatase 1</fullName>
        <ecNumber evidence="1">3.6.1.27</ecNumber>
    </recommendedName>
    <alternativeName>
        <fullName evidence="1">Bacitracin resistance protein 1</fullName>
    </alternativeName>
    <alternativeName>
        <fullName evidence="1">Undecaprenyl pyrophosphate phosphatase 1</fullName>
    </alternativeName>
</protein>
<evidence type="ECO:0000255" key="1">
    <source>
        <dbReference type="HAMAP-Rule" id="MF_01006"/>
    </source>
</evidence>
<evidence type="ECO:0000256" key="2">
    <source>
        <dbReference type="SAM" id="MobiDB-lite"/>
    </source>
</evidence>